<name>THIO2_PLAF7</name>
<keyword id="KW-0002">3D-structure</keyword>
<keyword id="KW-1015">Disulfide bond</keyword>
<keyword id="KW-0249">Electron transport</keyword>
<keyword id="KW-0472">Membrane</keyword>
<keyword id="KW-0676">Redox-active center</keyword>
<keyword id="KW-1185">Reference proteome</keyword>
<keyword id="KW-0732">Signal</keyword>
<keyword id="KW-0813">Transport</keyword>
<dbReference type="EMBL" id="AF484689">
    <property type="protein sequence ID" value="AAQ05974.1"/>
    <property type="molecule type" value="mRNA"/>
</dbReference>
<dbReference type="EMBL" id="AL844509">
    <property type="protein sequence ID" value="CAD52575.1"/>
    <property type="molecule type" value="Genomic_DNA"/>
</dbReference>
<dbReference type="RefSeq" id="XP_001350166.1">
    <property type="nucleotide sequence ID" value="XM_001350130.1"/>
</dbReference>
<dbReference type="PDB" id="3UL3">
    <property type="method" value="X-ray"/>
    <property type="resolution" value="2.90 A"/>
    <property type="chains" value="A/B=29-156"/>
</dbReference>
<dbReference type="PDB" id="4O32">
    <property type="method" value="X-ray"/>
    <property type="resolution" value="2.20 A"/>
    <property type="chains" value="A/B/C=24-157"/>
</dbReference>
<dbReference type="PDBsum" id="3UL3"/>
<dbReference type="PDBsum" id="4O32"/>
<dbReference type="SMR" id="Q8IDP4"/>
<dbReference type="STRING" id="36329.Q8IDP4"/>
<dbReference type="TCDB" id="3.A.26.1.1">
    <property type="family name" value="the plasmodium translocon of exported proteins (ptex) family"/>
</dbReference>
<dbReference type="PaxDb" id="5833-MAL13P1.225"/>
<dbReference type="EnsemblProtists" id="CAD52575">
    <property type="protein sequence ID" value="CAD52575"/>
    <property type="gene ID" value="PF3D7_1345100"/>
</dbReference>
<dbReference type="GeneID" id="813783"/>
<dbReference type="KEGG" id="pfa:PF3D7_1345100"/>
<dbReference type="VEuPathDB" id="PlasmoDB:PF3D7_1345100"/>
<dbReference type="HOGENOM" id="CLU_1681429_0_0_1"/>
<dbReference type="InParanoid" id="Q8IDP4"/>
<dbReference type="OMA" id="CHACKMQ"/>
<dbReference type="OrthoDB" id="2121326at2759"/>
<dbReference type="PhylomeDB" id="Q8IDP4"/>
<dbReference type="EvolutionaryTrace" id="Q8IDP4"/>
<dbReference type="Proteomes" id="UP000001450">
    <property type="component" value="Chromosome 13"/>
</dbReference>
<dbReference type="GO" id="GO:0005737">
    <property type="term" value="C:cytoplasm"/>
    <property type="evidence" value="ECO:0000318"/>
    <property type="project" value="GO_Central"/>
</dbReference>
<dbReference type="GO" id="GO:0016020">
    <property type="term" value="C:membrane"/>
    <property type="evidence" value="ECO:0007669"/>
    <property type="project" value="UniProtKB-KW"/>
</dbReference>
<dbReference type="GO" id="GO:0005739">
    <property type="term" value="C:mitochondrion"/>
    <property type="evidence" value="ECO:0000314"/>
    <property type="project" value="GeneDB"/>
</dbReference>
<dbReference type="GO" id="GO:0097619">
    <property type="term" value="C:PTEX complex"/>
    <property type="evidence" value="ECO:0000314"/>
    <property type="project" value="GeneDB"/>
</dbReference>
<dbReference type="GO" id="GO:0020003">
    <property type="term" value="C:symbiont-containing vacuole"/>
    <property type="evidence" value="ECO:0000314"/>
    <property type="project" value="GeneDB"/>
</dbReference>
<dbReference type="GO" id="GO:0020005">
    <property type="term" value="C:symbiont-containing vacuole membrane"/>
    <property type="evidence" value="ECO:0000314"/>
    <property type="project" value="UniProtKB"/>
</dbReference>
<dbReference type="GO" id="GO:0015035">
    <property type="term" value="F:protein-disulfide reductase activity"/>
    <property type="evidence" value="ECO:0000314"/>
    <property type="project" value="UniProtKB"/>
</dbReference>
<dbReference type="CDD" id="cd02947">
    <property type="entry name" value="TRX_family"/>
    <property type="match status" value="1"/>
</dbReference>
<dbReference type="FunFam" id="3.40.30.10:FF:000405">
    <property type="entry name" value="Thioredoxin 2"/>
    <property type="match status" value="1"/>
</dbReference>
<dbReference type="Gene3D" id="3.40.30.10">
    <property type="entry name" value="Glutaredoxin"/>
    <property type="match status" value="1"/>
</dbReference>
<dbReference type="InterPro" id="IPR036249">
    <property type="entry name" value="Thioredoxin-like_sf"/>
</dbReference>
<dbReference type="InterPro" id="IPR013766">
    <property type="entry name" value="Thioredoxin_domain"/>
</dbReference>
<dbReference type="PANTHER" id="PTHR45663">
    <property type="entry name" value="GEO12009P1"/>
    <property type="match status" value="1"/>
</dbReference>
<dbReference type="PANTHER" id="PTHR45663:SF11">
    <property type="entry name" value="GEO12009P1"/>
    <property type="match status" value="1"/>
</dbReference>
<dbReference type="Pfam" id="PF00085">
    <property type="entry name" value="Thioredoxin"/>
    <property type="match status" value="1"/>
</dbReference>
<dbReference type="SUPFAM" id="SSF52833">
    <property type="entry name" value="Thioredoxin-like"/>
    <property type="match status" value="1"/>
</dbReference>
<dbReference type="PROSITE" id="PS51352">
    <property type="entry name" value="THIOREDOXIN_2"/>
    <property type="match status" value="1"/>
</dbReference>
<gene>
    <name evidence="9" type="primary">TRX2</name>
    <name evidence="15" type="ORF">PF3D7_1345100</name>
</gene>
<comment type="function">
    <text evidence="1 5 6 7 10">Participates in various redox reactions through the reversible oxidation of its active center dithiol to a disulfide and catalyzes dithiol-disulfide exchange reactions (PubMed:16910770, PubMed:22355694). As part of the translocon PTEX complex, plays a role in the export of parasite proteins into the host erythrocyte (By similarity). The translocon PTEX complex is a multi-protein machinery resident in the parasite parasitophorous vacuolar membrane, responsible for protein secretion into host cells (PubMed:19536257). May contribute to the unfolding of proteins containing the PEXEL localization motif before their passage through the translocon or regulate the PTEX complex function (PubMed:19536257).</text>
</comment>
<comment type="subunit">
    <text evidence="6 8">Monomer (PubMed:25475729). Component of the Plasmodium translocon of exported proteins (PTEX) complex composed of HSP101, EXP2, PTEX150, PTEX88 and TRX2 (PubMed:19536257).</text>
</comment>
<comment type="subcellular location">
    <subcellularLocation>
        <location evidence="7">Parasitophorous vacuole membrane</location>
        <topology evidence="11">Peripheral membrane protein</topology>
    </subcellularLocation>
    <text evidence="7">Appears to localize to other uncharacterized organelles.</text>
</comment>
<comment type="developmental stage">
    <text evidence="7">Expressed during the parasite blood stage, including in rings, trophozoites, schizonts and merozoites (at protein level).</text>
</comment>
<comment type="PTM">
    <text evidence="12 13">The disulfide bond between Cys-82 and Cys-85 acts as a redox-active center and is reduced by thioredoxin reductase TRXR.</text>
</comment>
<comment type="similarity">
    <text evidence="11">Belongs to the thioredoxin family.</text>
</comment>
<evidence type="ECO:0000250" key="1">
    <source>
        <dbReference type="UniProtKB" id="A0A509AQW5"/>
    </source>
</evidence>
<evidence type="ECO:0000250" key="2">
    <source>
        <dbReference type="UniProtKB" id="P10599"/>
    </source>
</evidence>
<evidence type="ECO:0000255" key="3"/>
<evidence type="ECO:0000255" key="4">
    <source>
        <dbReference type="PROSITE-ProRule" id="PRU00691"/>
    </source>
</evidence>
<evidence type="ECO:0000269" key="5">
    <source>
    </source>
</evidence>
<evidence type="ECO:0000269" key="6">
    <source>
    </source>
</evidence>
<evidence type="ECO:0000269" key="7">
    <source>
    </source>
</evidence>
<evidence type="ECO:0000269" key="8">
    <source>
    </source>
</evidence>
<evidence type="ECO:0000303" key="9">
    <source>
    </source>
</evidence>
<evidence type="ECO:0000303" key="10">
    <source>
    </source>
</evidence>
<evidence type="ECO:0000305" key="11"/>
<evidence type="ECO:0000305" key="12">
    <source>
    </source>
</evidence>
<evidence type="ECO:0000305" key="13">
    <source>
    </source>
</evidence>
<evidence type="ECO:0000312" key="14">
    <source>
        <dbReference type="EMBL" id="AAQ05974.1"/>
    </source>
</evidence>
<evidence type="ECO:0000312" key="15">
    <source>
        <dbReference type="EMBL" id="CAD52575.1"/>
    </source>
</evidence>
<evidence type="ECO:0000312" key="16">
    <source>
        <dbReference type="Proteomes" id="UP000001450"/>
    </source>
</evidence>
<evidence type="ECO:0007744" key="17">
    <source>
        <dbReference type="PDB" id="3UL3"/>
    </source>
</evidence>
<evidence type="ECO:0007744" key="18">
    <source>
        <dbReference type="PDB" id="4O32"/>
    </source>
</evidence>
<evidence type="ECO:0007829" key="19">
    <source>
        <dbReference type="PDB" id="3UL3"/>
    </source>
</evidence>
<evidence type="ECO:0007829" key="20">
    <source>
        <dbReference type="PDB" id="4O32"/>
    </source>
</evidence>
<accession>Q8IDP4</accession>
<sequence length="157" mass="18630">MKKYIFFFLFSFINFFFVYDVTCTKEVTSTNDDPLTPLNRFDKYYLRMFKKVPRLQQNGSNIINGVNMKNTVIVLYFFAKWCQACTMQSTEMDKLQKYYGKRIYLLKVDLDKNESLARKFSVKSLPTIILLKNKTMLARKDHFVSSNDLIALIKKHL</sequence>
<proteinExistence type="evidence at protein level"/>
<reference evidence="14" key="1">
    <citation type="submission" date="2002-02" db="EMBL/GenBank/DDBJ databases">
        <title>Plasmodium falciparum possesses a mitochondrial thioredoxin system.</title>
        <authorList>
            <person name="Nickel C."/>
            <person name="Rahlfs S."/>
            <person name="Becker K."/>
        </authorList>
    </citation>
    <scope>NUCLEOTIDE SEQUENCE [MRNA]</scope>
    <source>
        <strain evidence="14">3D7</strain>
    </source>
</reference>
<reference evidence="16" key="2">
    <citation type="journal article" date="2002" name="Nature">
        <title>Genome sequence of the human malaria parasite Plasmodium falciparum.</title>
        <authorList>
            <person name="Gardner M.J."/>
            <person name="Hall N."/>
            <person name="Fung E."/>
            <person name="White O."/>
            <person name="Berriman M."/>
            <person name="Hyman R.W."/>
            <person name="Carlton J.M."/>
            <person name="Pain A."/>
            <person name="Nelson K.E."/>
            <person name="Bowman S."/>
            <person name="Paulsen I.T."/>
            <person name="James K.D."/>
            <person name="Eisen J.A."/>
            <person name="Rutherford K.M."/>
            <person name="Salzberg S.L."/>
            <person name="Craig A."/>
            <person name="Kyes S."/>
            <person name="Chan M.-S."/>
            <person name="Nene V."/>
            <person name="Shallom S.J."/>
            <person name="Suh B."/>
            <person name="Peterson J."/>
            <person name="Angiuoli S."/>
            <person name="Pertea M."/>
            <person name="Allen J."/>
            <person name="Selengut J."/>
            <person name="Haft D."/>
            <person name="Mather M.W."/>
            <person name="Vaidya A.B."/>
            <person name="Martin D.M.A."/>
            <person name="Fairlamb A.H."/>
            <person name="Fraunholz M.J."/>
            <person name="Roos D.S."/>
            <person name="Ralph S.A."/>
            <person name="McFadden G.I."/>
            <person name="Cummings L.M."/>
            <person name="Subramanian G.M."/>
            <person name="Mungall C."/>
            <person name="Venter J.C."/>
            <person name="Carucci D.J."/>
            <person name="Hoffman S.L."/>
            <person name="Newbold C."/>
            <person name="Davis R.W."/>
            <person name="Fraser C.M."/>
            <person name="Barrell B.G."/>
        </authorList>
    </citation>
    <scope>NUCLEOTIDE SEQUENCE [LARGE SCALE GENOMIC DNA]</scope>
    <source>
        <strain evidence="16">3D7</strain>
    </source>
</reference>
<reference evidence="16" key="3">
    <citation type="journal article" date="2002" name="Nature">
        <title>Sequence of Plasmodium falciparum chromosomes 1, 3-9 and 13.</title>
        <authorList>
            <person name="Hall N."/>
            <person name="Pain A."/>
            <person name="Berriman M."/>
            <person name="Churcher C.M."/>
            <person name="Harris B."/>
            <person name="Harris D."/>
            <person name="Mungall K.L."/>
            <person name="Bowman S."/>
            <person name="Atkin R."/>
            <person name="Baker S."/>
            <person name="Barron A."/>
            <person name="Brooks K."/>
            <person name="Buckee C.O."/>
            <person name="Burrows C."/>
            <person name="Cherevach I."/>
            <person name="Chillingworth C."/>
            <person name="Chillingworth T."/>
            <person name="Christodoulou Z."/>
            <person name="Clark L."/>
            <person name="Clark R."/>
            <person name="Corton C."/>
            <person name="Cronin A."/>
            <person name="Davies R.M."/>
            <person name="Davis P."/>
            <person name="Dear P."/>
            <person name="Dearden F."/>
            <person name="Doggett J."/>
            <person name="Feltwell T."/>
            <person name="Goble A."/>
            <person name="Goodhead I."/>
            <person name="Gwilliam R."/>
            <person name="Hamlin N."/>
            <person name="Hance Z."/>
            <person name="Harper D."/>
            <person name="Hauser H."/>
            <person name="Hornsby T."/>
            <person name="Holroyd S."/>
            <person name="Horrocks P."/>
            <person name="Humphray S."/>
            <person name="Jagels K."/>
            <person name="James K.D."/>
            <person name="Johnson D."/>
            <person name="Kerhornou A."/>
            <person name="Knights A."/>
            <person name="Konfortov B."/>
            <person name="Kyes S."/>
            <person name="Larke N."/>
            <person name="Lawson D."/>
            <person name="Lennard N."/>
            <person name="Line A."/>
            <person name="Maddison M."/>
            <person name="Mclean J."/>
            <person name="Mooney P."/>
            <person name="Moule S."/>
            <person name="Murphy L."/>
            <person name="Oliver K."/>
            <person name="Ormond D."/>
            <person name="Price C."/>
            <person name="Quail M.A."/>
            <person name="Rabbinowitsch E."/>
            <person name="Rajandream M.A."/>
            <person name="Rutter S."/>
            <person name="Rutherford K.M."/>
            <person name="Sanders M."/>
            <person name="Simmonds M."/>
            <person name="Seeger K."/>
            <person name="Sharp S."/>
            <person name="Smith R."/>
            <person name="Squares R."/>
            <person name="Squares S."/>
            <person name="Stevens K."/>
            <person name="Taylor K."/>
            <person name="Tivey A."/>
            <person name="Unwin L."/>
            <person name="Whitehead S."/>
            <person name="Woodward J.R."/>
            <person name="Sulston J.E."/>
            <person name="Craig A."/>
            <person name="Newbold C."/>
            <person name="Barrell B.G."/>
        </authorList>
    </citation>
    <scope>NUCLEOTIDE SEQUENCE [LARGE SCALE GENOMIC DNA]</scope>
    <source>
        <strain evidence="16">3D7</strain>
    </source>
</reference>
<reference evidence="11" key="4">
    <citation type="journal article" date="2006" name="Antioxid. Redox Signal.">
        <title>Thioredoxin networks in the malarial parasite Plasmodium falciparum.</title>
        <authorList>
            <person name="Nickel C."/>
            <person name="Rahlfs S."/>
            <person name="Deponte M."/>
            <person name="Koncarevic S."/>
            <person name="Becker K."/>
        </authorList>
    </citation>
    <scope>FUNCTION</scope>
    <scope>DISULFIDE BOND</scope>
</reference>
<reference evidence="11" key="5">
    <citation type="journal article" date="2009" name="Nature">
        <title>A newly discovered protein export machine in malaria parasites.</title>
        <authorList>
            <person name="de Koning-Ward T.F."/>
            <person name="Gilson P.R."/>
            <person name="Boddey J.A."/>
            <person name="Rug M."/>
            <person name="Smith B.J."/>
            <person name="Papenfuss A.T."/>
            <person name="Sanders P.R."/>
            <person name="Lundie R.J."/>
            <person name="Maier A.G."/>
            <person name="Cowman A.F."/>
            <person name="Crabb B.S."/>
        </authorList>
    </citation>
    <scope>FUNCTION</scope>
    <scope>IDENTIFICATION IN THE PTEX COMPLEX</scope>
</reference>
<reference evidence="17" key="6">
    <citation type="journal article" date="2011" name="Sci. Rep.">
        <title>Structural insights into thioredoxin-2: a component of malaria parasite protein secretion machinery.</title>
        <authorList>
            <person name="Sharma A."/>
            <person name="Sharma A."/>
            <person name="Dixit S."/>
            <person name="Sharma A."/>
        </authorList>
    </citation>
    <scope>X-RAY CRYSTALLOGRAPHY (2.90 ANGSTROMS) OF 29-156</scope>
    <scope>FUNCTION</scope>
    <scope>SUBCELLULAR LOCATION</scope>
    <scope>DEVELOPMENTAL STAGE</scope>
</reference>
<reference evidence="18" key="7">
    <citation type="journal article" date="2015" name="Biochem. Biophys. Res. Commun.">
        <title>Crystal structure and solution characterization of the thioredoxin-2 from Plasmodium falciparum, a constituent of an essential parasitic protein export complex.</title>
        <authorList>
            <person name="Peng M."/>
            <person name="Cascio D."/>
            <person name="Egea P.F."/>
        </authorList>
    </citation>
    <scope>X-RAY CRYSTALLOGRAPHY (2.20 ANGSTROMS) OF 24-157</scope>
    <scope>SUBUNIT</scope>
    <scope>DISULFIDE BOND</scope>
</reference>
<feature type="signal peptide" evidence="3">
    <location>
        <begin position="1"/>
        <end position="23"/>
    </location>
</feature>
<feature type="chain" id="PRO_5011949510" description="Thioredoxin 2" evidence="3">
    <location>
        <begin position="24"/>
        <end position="157"/>
    </location>
</feature>
<feature type="domain" description="Thioredoxin" evidence="4">
    <location>
        <begin position="46"/>
        <end position="157"/>
    </location>
</feature>
<feature type="active site" description="Nucleophile" evidence="2">
    <location>
        <position position="82"/>
    </location>
</feature>
<feature type="active site" description="Nucleophile" evidence="2">
    <location>
        <position position="85"/>
    </location>
</feature>
<feature type="disulfide bond" description="Redox-active" evidence="4 8 18">
    <location>
        <begin position="82"/>
        <end position="85"/>
    </location>
</feature>
<feature type="strand" evidence="19">
    <location>
        <begin position="61"/>
        <end position="65"/>
    </location>
</feature>
<feature type="strand" evidence="20">
    <location>
        <begin position="72"/>
        <end position="78"/>
    </location>
</feature>
<feature type="helix" evidence="20">
    <location>
        <begin position="85"/>
        <end position="99"/>
    </location>
</feature>
<feature type="helix" evidence="20">
    <location>
        <begin position="100"/>
        <end position="102"/>
    </location>
</feature>
<feature type="strand" evidence="20">
    <location>
        <begin position="103"/>
        <end position="109"/>
    </location>
</feature>
<feature type="helix" evidence="20">
    <location>
        <begin position="110"/>
        <end position="112"/>
    </location>
</feature>
<feature type="helix" evidence="20">
    <location>
        <begin position="114"/>
        <end position="119"/>
    </location>
</feature>
<feature type="strand" evidence="20">
    <location>
        <begin position="124"/>
        <end position="132"/>
    </location>
</feature>
<feature type="strand" evidence="20">
    <location>
        <begin position="135"/>
        <end position="142"/>
    </location>
</feature>
<feature type="helix" evidence="20">
    <location>
        <begin position="146"/>
        <end position="157"/>
    </location>
</feature>
<protein>
    <recommendedName>
        <fullName evidence="9">Thioredoxin 2</fullName>
        <shortName evidence="9">PfTRX2</shortName>
    </recommendedName>
</protein>
<organism evidence="16">
    <name type="scientific">Plasmodium falciparum (isolate 3D7)</name>
    <dbReference type="NCBI Taxonomy" id="36329"/>
    <lineage>
        <taxon>Eukaryota</taxon>
        <taxon>Sar</taxon>
        <taxon>Alveolata</taxon>
        <taxon>Apicomplexa</taxon>
        <taxon>Aconoidasida</taxon>
        <taxon>Haemosporida</taxon>
        <taxon>Plasmodiidae</taxon>
        <taxon>Plasmodium</taxon>
        <taxon>Plasmodium (Laverania)</taxon>
    </lineage>
</organism>